<keyword id="KW-1003">Cell membrane</keyword>
<keyword id="KW-0961">Cell wall biogenesis/degradation</keyword>
<keyword id="KW-0328">Glycosyltransferase</keyword>
<keyword id="KW-0472">Membrane</keyword>
<keyword id="KW-0808">Transferase</keyword>
<keyword id="KW-0812">Transmembrane</keyword>
<comment type="function">
    <text evidence="1">Polymerizes chitin, a structural polymer of the cell wall and septum, by transferring the sugar moiety of UDP-GlcNAc to the non-reducing end of the growing chitin polymer.</text>
</comment>
<comment type="catalytic activity">
    <reaction>
        <text>[(1-&gt;4)-N-acetyl-beta-D-glucosaminyl](n) + UDP-N-acetyl-alpha-D-glucosamine = [(1-&gt;4)-N-acetyl-beta-D-glucosaminyl](n+1) + UDP + H(+)</text>
        <dbReference type="Rhea" id="RHEA:16637"/>
        <dbReference type="Rhea" id="RHEA-COMP:9593"/>
        <dbReference type="Rhea" id="RHEA-COMP:9595"/>
        <dbReference type="ChEBI" id="CHEBI:15378"/>
        <dbReference type="ChEBI" id="CHEBI:17029"/>
        <dbReference type="ChEBI" id="CHEBI:57705"/>
        <dbReference type="ChEBI" id="CHEBI:58223"/>
        <dbReference type="EC" id="2.4.1.16"/>
    </reaction>
</comment>
<comment type="subcellular location">
    <subcellularLocation>
        <location evidence="1">Cell membrane</location>
        <topology evidence="1">Multi-pass membrane protein</topology>
    </subcellularLocation>
</comment>
<comment type="similarity">
    <text evidence="1">Belongs to the chitin synthase family. Class II subfamily.</text>
</comment>
<name>CHS2_XYLBA</name>
<reference key="1">
    <citation type="journal article" date="1992" name="Proc. Natl. Acad. Sci. U.S.A.">
        <title>Classification of fungal chitin synthases.</title>
        <authorList>
            <person name="Bowen A.R."/>
            <person name="Chen-Wu J.L.-P."/>
            <person name="Momany M."/>
            <person name="Young R."/>
            <person name="Szaniszlo P.J."/>
            <person name="Robbins P.W."/>
        </authorList>
    </citation>
    <scope>NUCLEOTIDE SEQUENCE [GENOMIC DNA]</scope>
</reference>
<dbReference type="EC" id="2.4.1.16"/>
<dbReference type="EMBL" id="M82961">
    <property type="protein sequence ID" value="AAA34313.1"/>
    <property type="molecule type" value="Genomic_DNA"/>
</dbReference>
<dbReference type="PIR" id="D45189">
    <property type="entry name" value="D45189"/>
</dbReference>
<dbReference type="SMR" id="P30604"/>
<dbReference type="CAZy" id="GT2">
    <property type="family name" value="Glycosyltransferase Family 2"/>
</dbReference>
<dbReference type="GO" id="GO:0030428">
    <property type="term" value="C:cell septum"/>
    <property type="evidence" value="ECO:0007669"/>
    <property type="project" value="TreeGrafter"/>
</dbReference>
<dbReference type="GO" id="GO:0005886">
    <property type="term" value="C:plasma membrane"/>
    <property type="evidence" value="ECO:0007669"/>
    <property type="project" value="UniProtKB-SubCell"/>
</dbReference>
<dbReference type="GO" id="GO:0004100">
    <property type="term" value="F:chitin synthase activity"/>
    <property type="evidence" value="ECO:0007669"/>
    <property type="project" value="UniProtKB-EC"/>
</dbReference>
<dbReference type="GO" id="GO:0071555">
    <property type="term" value="P:cell wall organization"/>
    <property type="evidence" value="ECO:0007669"/>
    <property type="project" value="UniProtKB-KW"/>
</dbReference>
<dbReference type="GO" id="GO:0006031">
    <property type="term" value="P:chitin biosynthetic process"/>
    <property type="evidence" value="ECO:0007669"/>
    <property type="project" value="InterPro"/>
</dbReference>
<dbReference type="InterPro" id="IPR004835">
    <property type="entry name" value="Chitin_synth"/>
</dbReference>
<dbReference type="InterPro" id="IPR004834">
    <property type="entry name" value="Chitin_synth_fun"/>
</dbReference>
<dbReference type="PANTHER" id="PTHR22914">
    <property type="entry name" value="CHITIN SYNTHASE"/>
    <property type="match status" value="1"/>
</dbReference>
<dbReference type="PANTHER" id="PTHR22914:SF38">
    <property type="entry name" value="CHITIN SYNTHASE 2"/>
    <property type="match status" value="1"/>
</dbReference>
<dbReference type="Pfam" id="PF01644">
    <property type="entry name" value="Chitin_synth_1"/>
    <property type="match status" value="1"/>
</dbReference>
<gene>
    <name type="primary">CHS2</name>
</gene>
<feature type="chain" id="PRO_0000193726" description="Chitin synthase 2">
    <location>
        <begin position="1" status="less than"/>
        <end position="189" status="greater than"/>
    </location>
</feature>
<feature type="non-terminal residue">
    <location>
        <position position="1"/>
    </location>
</feature>
<feature type="non-terminal residue">
    <location>
        <position position="189"/>
    </location>
</feature>
<accession>P30604</accession>
<sequence length="189" mass="21116">EIEFTRTMHGIMRNISHFCSRTKSRTWGKDGWQKIVVCVIADGRQNVHPRTLNALAAMGVYQDGIAKNEVNSKEVTAHVYEYTTQVSLDETLKFKGAEKGTVPCQDVFCLKEKNKKKLNSHRWFFNAFGRALTPNVCILLDVGTKPDSKALYHLWKAFDQDSNVAGAAGEIKADKGKGWMGLLNPLVAS</sequence>
<organism>
    <name type="scientific">Xylohypha bantiana</name>
    <dbReference type="NCBI Taxonomy" id="89940"/>
    <lineage>
        <taxon>Eukaryota</taxon>
        <taxon>Fungi</taxon>
        <taxon>Dikarya</taxon>
        <taxon>Ascomycota</taxon>
        <taxon>Pezizomycotina</taxon>
        <taxon>Eurotiomycetes</taxon>
        <taxon>Chaetothyriomycetidae</taxon>
        <taxon>Chaetothyriales</taxon>
        <taxon>Herpotrichiellaceae</taxon>
        <taxon>Cladophialophora</taxon>
    </lineage>
</organism>
<evidence type="ECO:0000305" key="1"/>
<protein>
    <recommendedName>
        <fullName>Chitin synthase 2</fullName>
        <ecNumber>2.4.1.16</ecNumber>
    </recommendedName>
    <alternativeName>
        <fullName>Chitin-UDP acetyl-glucosaminyl transferase 2</fullName>
    </alternativeName>
    <alternativeName>
        <fullName>Class-II chitin synthase 2</fullName>
    </alternativeName>
</protein>
<proteinExistence type="inferred from homology"/>